<feature type="chain" id="PRO_1000009350" description="Leucine--tRNA ligase">
    <location>
        <begin position="1"/>
        <end position="860"/>
    </location>
</feature>
<feature type="short sequence motif" description="'HIGH' region">
    <location>
        <begin position="42"/>
        <end position="52"/>
    </location>
</feature>
<feature type="short sequence motif" description="'KMSKS' region">
    <location>
        <begin position="619"/>
        <end position="623"/>
    </location>
</feature>
<feature type="binding site" evidence="1">
    <location>
        <position position="622"/>
    </location>
    <ligand>
        <name>ATP</name>
        <dbReference type="ChEBI" id="CHEBI:30616"/>
    </ligand>
</feature>
<sequence length="860" mass="98111">MQEQYRPDLIEADVQKYWAEKKTFKAVKDPSKEKYYCLSMFPYPSGRLHMGHVRNYTIGDVISRYQRMNGKNVLQPMGWDAFGLPAEGAAIKNKTAPAKWTYENIEYMKNQLKVLGFGFDWDREITTCKPEYYKWEQWFFTELYKKGLVYKKTSTVNWCPNDETVLANEQVHEGCCWRCDTPVEQKEIPQWFIKITDYAEQLLSDLDQLPEWPDMVKTMQRNWIGRSEGVEITFNVAHSDQTLTVYTTRPDTFYGVSYLAVAAAHPLAESAAKNNPELAAFIHEAKNTKVAEAELATMEKKGMATGLYAVHPMTGKQLPIWVANFVLMHYGTGAVMAVPAHDQRDYEFAQKYQLPLFPVIKPADNSAWDFSKQAYTEHGITINSAEFDGLDFEATFNGIADKLEKIGVGKRQVNYRLRDWGVSRQRYWGAPIPMLTLENGDVVVAPLQDLPIVLPEDVVMDGVKSPIKADPEWAKTTYNGQAALKETDTFDTFMESSWYYARYTSPQYQQAMLDADEANYWLPVDQYIGGIEHATMHLLYFRFFHKLLRDAGFVTSDEPSKKLLCQGMVLADAFYYTSPTNERIWVSPTKVTLERDEKGRIIKAVDDEGHELVHSGMTKMSKSKNNGIDPQEMVEKYGADTVRLFMMFASPAEMTLEWQESGVEGANRFLRRLWNLVFEYNQNPAQTALDPTALSVEQKALRRDVHKTIAKVSDDIGRRQTFNTAIAAIMELMNKLTKASLSNEQDRAVMAEALNAVVRMLYPITPHICFQLWQDLGNESTIDFAPWVIADAEAMVEDEKLVVIQVNGKVRAKVTVPADMSEDEIKQVALAEENVQKFLNGLTVVKTIYVQGKLFSFVAK</sequence>
<gene>
    <name evidence="1" type="primary">leuS</name>
    <name type="ordered locus">HS_1557</name>
</gene>
<evidence type="ECO:0000255" key="1">
    <source>
        <dbReference type="HAMAP-Rule" id="MF_00049"/>
    </source>
</evidence>
<organism>
    <name type="scientific">Histophilus somni (strain 129Pt)</name>
    <name type="common">Haemophilus somnus</name>
    <dbReference type="NCBI Taxonomy" id="205914"/>
    <lineage>
        <taxon>Bacteria</taxon>
        <taxon>Pseudomonadati</taxon>
        <taxon>Pseudomonadota</taxon>
        <taxon>Gammaproteobacteria</taxon>
        <taxon>Pasteurellales</taxon>
        <taxon>Pasteurellaceae</taxon>
        <taxon>Histophilus</taxon>
    </lineage>
</organism>
<protein>
    <recommendedName>
        <fullName evidence="1">Leucine--tRNA ligase</fullName>
        <ecNumber evidence="1">6.1.1.4</ecNumber>
    </recommendedName>
    <alternativeName>
        <fullName evidence="1">Leucyl-tRNA synthetase</fullName>
        <shortName evidence="1">LeuRS</shortName>
    </alternativeName>
</protein>
<proteinExistence type="inferred from homology"/>
<comment type="catalytic activity">
    <reaction evidence="1">
        <text>tRNA(Leu) + L-leucine + ATP = L-leucyl-tRNA(Leu) + AMP + diphosphate</text>
        <dbReference type="Rhea" id="RHEA:11688"/>
        <dbReference type="Rhea" id="RHEA-COMP:9613"/>
        <dbReference type="Rhea" id="RHEA-COMP:9622"/>
        <dbReference type="ChEBI" id="CHEBI:30616"/>
        <dbReference type="ChEBI" id="CHEBI:33019"/>
        <dbReference type="ChEBI" id="CHEBI:57427"/>
        <dbReference type="ChEBI" id="CHEBI:78442"/>
        <dbReference type="ChEBI" id="CHEBI:78494"/>
        <dbReference type="ChEBI" id="CHEBI:456215"/>
        <dbReference type="EC" id="6.1.1.4"/>
    </reaction>
</comment>
<comment type="subcellular location">
    <subcellularLocation>
        <location evidence="1">Cytoplasm</location>
    </subcellularLocation>
</comment>
<comment type="similarity">
    <text evidence="1">Belongs to the class-I aminoacyl-tRNA synthetase family.</text>
</comment>
<keyword id="KW-0030">Aminoacyl-tRNA synthetase</keyword>
<keyword id="KW-0067">ATP-binding</keyword>
<keyword id="KW-0963">Cytoplasm</keyword>
<keyword id="KW-0436">Ligase</keyword>
<keyword id="KW-0547">Nucleotide-binding</keyword>
<keyword id="KW-0648">Protein biosynthesis</keyword>
<accession>Q0I5C5</accession>
<dbReference type="EC" id="6.1.1.4" evidence="1"/>
<dbReference type="EMBL" id="CP000436">
    <property type="protein sequence ID" value="ABI25825.1"/>
    <property type="molecule type" value="Genomic_DNA"/>
</dbReference>
<dbReference type="SMR" id="Q0I5C5"/>
<dbReference type="KEGG" id="hso:HS_1557"/>
<dbReference type="eggNOG" id="COG0495">
    <property type="taxonomic scope" value="Bacteria"/>
</dbReference>
<dbReference type="HOGENOM" id="CLU_004427_0_0_6"/>
<dbReference type="GO" id="GO:0005829">
    <property type="term" value="C:cytosol"/>
    <property type="evidence" value="ECO:0007669"/>
    <property type="project" value="TreeGrafter"/>
</dbReference>
<dbReference type="GO" id="GO:0002161">
    <property type="term" value="F:aminoacyl-tRNA deacylase activity"/>
    <property type="evidence" value="ECO:0007669"/>
    <property type="project" value="InterPro"/>
</dbReference>
<dbReference type="GO" id="GO:0005524">
    <property type="term" value="F:ATP binding"/>
    <property type="evidence" value="ECO:0007669"/>
    <property type="project" value="UniProtKB-UniRule"/>
</dbReference>
<dbReference type="GO" id="GO:0004823">
    <property type="term" value="F:leucine-tRNA ligase activity"/>
    <property type="evidence" value="ECO:0007669"/>
    <property type="project" value="UniProtKB-UniRule"/>
</dbReference>
<dbReference type="GO" id="GO:0006429">
    <property type="term" value="P:leucyl-tRNA aminoacylation"/>
    <property type="evidence" value="ECO:0007669"/>
    <property type="project" value="UniProtKB-UniRule"/>
</dbReference>
<dbReference type="CDD" id="cd07958">
    <property type="entry name" value="Anticodon_Ia_Leu_BEm"/>
    <property type="match status" value="1"/>
</dbReference>
<dbReference type="CDD" id="cd00812">
    <property type="entry name" value="LeuRS_core"/>
    <property type="match status" value="1"/>
</dbReference>
<dbReference type="FunFam" id="1.10.730.10:FF:000002">
    <property type="entry name" value="Leucine--tRNA ligase"/>
    <property type="match status" value="1"/>
</dbReference>
<dbReference type="FunFam" id="2.20.28.290:FF:000001">
    <property type="entry name" value="Leucine--tRNA ligase"/>
    <property type="match status" value="1"/>
</dbReference>
<dbReference type="FunFam" id="3.10.20.590:FF:000001">
    <property type="entry name" value="Leucine--tRNA ligase"/>
    <property type="match status" value="1"/>
</dbReference>
<dbReference type="FunFam" id="3.40.50.620:FF:000003">
    <property type="entry name" value="Leucine--tRNA ligase"/>
    <property type="match status" value="1"/>
</dbReference>
<dbReference type="FunFam" id="3.40.50.620:FF:000051">
    <property type="entry name" value="Leucine--tRNA ligase"/>
    <property type="match status" value="1"/>
</dbReference>
<dbReference type="FunFam" id="3.90.740.10:FF:000012">
    <property type="entry name" value="Leucine--tRNA ligase"/>
    <property type="match status" value="1"/>
</dbReference>
<dbReference type="Gene3D" id="2.20.28.290">
    <property type="match status" value="1"/>
</dbReference>
<dbReference type="Gene3D" id="3.10.20.590">
    <property type="match status" value="1"/>
</dbReference>
<dbReference type="Gene3D" id="3.40.50.620">
    <property type="entry name" value="HUPs"/>
    <property type="match status" value="2"/>
</dbReference>
<dbReference type="Gene3D" id="1.10.730.10">
    <property type="entry name" value="Isoleucyl-tRNA Synthetase, Domain 1"/>
    <property type="match status" value="1"/>
</dbReference>
<dbReference type="HAMAP" id="MF_00049_B">
    <property type="entry name" value="Leu_tRNA_synth_B"/>
    <property type="match status" value="1"/>
</dbReference>
<dbReference type="InterPro" id="IPR001412">
    <property type="entry name" value="aa-tRNA-synth_I_CS"/>
</dbReference>
<dbReference type="InterPro" id="IPR002300">
    <property type="entry name" value="aa-tRNA-synth_Ia"/>
</dbReference>
<dbReference type="InterPro" id="IPR002302">
    <property type="entry name" value="Leu-tRNA-ligase"/>
</dbReference>
<dbReference type="InterPro" id="IPR025709">
    <property type="entry name" value="Leu_tRNA-synth_edit"/>
</dbReference>
<dbReference type="InterPro" id="IPR013155">
    <property type="entry name" value="M/V/L/I-tRNA-synth_anticd-bd"/>
</dbReference>
<dbReference type="InterPro" id="IPR015413">
    <property type="entry name" value="Methionyl/Leucyl_tRNA_Synth"/>
</dbReference>
<dbReference type="InterPro" id="IPR014729">
    <property type="entry name" value="Rossmann-like_a/b/a_fold"/>
</dbReference>
<dbReference type="InterPro" id="IPR009080">
    <property type="entry name" value="tRNAsynth_Ia_anticodon-bd"/>
</dbReference>
<dbReference type="InterPro" id="IPR009008">
    <property type="entry name" value="Val/Leu/Ile-tRNA-synth_edit"/>
</dbReference>
<dbReference type="NCBIfam" id="TIGR00396">
    <property type="entry name" value="leuS_bact"/>
    <property type="match status" value="1"/>
</dbReference>
<dbReference type="PANTHER" id="PTHR43740:SF2">
    <property type="entry name" value="LEUCINE--TRNA LIGASE, MITOCHONDRIAL"/>
    <property type="match status" value="1"/>
</dbReference>
<dbReference type="PANTHER" id="PTHR43740">
    <property type="entry name" value="LEUCYL-TRNA SYNTHETASE"/>
    <property type="match status" value="1"/>
</dbReference>
<dbReference type="Pfam" id="PF08264">
    <property type="entry name" value="Anticodon_1"/>
    <property type="match status" value="1"/>
</dbReference>
<dbReference type="Pfam" id="PF00133">
    <property type="entry name" value="tRNA-synt_1"/>
    <property type="match status" value="2"/>
</dbReference>
<dbReference type="Pfam" id="PF13603">
    <property type="entry name" value="tRNA-synt_1_2"/>
    <property type="match status" value="1"/>
</dbReference>
<dbReference type="Pfam" id="PF09334">
    <property type="entry name" value="tRNA-synt_1g"/>
    <property type="match status" value="1"/>
</dbReference>
<dbReference type="PRINTS" id="PR00985">
    <property type="entry name" value="TRNASYNTHLEU"/>
</dbReference>
<dbReference type="SUPFAM" id="SSF47323">
    <property type="entry name" value="Anticodon-binding domain of a subclass of class I aminoacyl-tRNA synthetases"/>
    <property type="match status" value="1"/>
</dbReference>
<dbReference type="SUPFAM" id="SSF52374">
    <property type="entry name" value="Nucleotidylyl transferase"/>
    <property type="match status" value="1"/>
</dbReference>
<dbReference type="SUPFAM" id="SSF50677">
    <property type="entry name" value="ValRS/IleRS/LeuRS editing domain"/>
    <property type="match status" value="1"/>
</dbReference>
<dbReference type="PROSITE" id="PS00178">
    <property type="entry name" value="AA_TRNA_LIGASE_I"/>
    <property type="match status" value="1"/>
</dbReference>
<name>SYL_HISS1</name>
<reference key="1">
    <citation type="journal article" date="2007" name="J. Bacteriol.">
        <title>Complete genome sequence of Haemophilus somnus (Histophilus somni) strain 129Pt and comparison to Haemophilus ducreyi 35000HP and Haemophilus influenzae Rd.</title>
        <authorList>
            <person name="Challacombe J.F."/>
            <person name="Duncan A.J."/>
            <person name="Brettin T.S."/>
            <person name="Bruce D."/>
            <person name="Chertkov O."/>
            <person name="Detter J.C."/>
            <person name="Han C.S."/>
            <person name="Misra M."/>
            <person name="Richardson P."/>
            <person name="Tapia R."/>
            <person name="Thayer N."/>
            <person name="Xie G."/>
            <person name="Inzana T.J."/>
        </authorList>
    </citation>
    <scope>NUCLEOTIDE SEQUENCE [LARGE SCALE GENOMIC DNA]</scope>
    <source>
        <strain>129Pt</strain>
    </source>
</reference>